<evidence type="ECO:0000255" key="1">
    <source>
        <dbReference type="HAMAP-Rule" id="MF_01152"/>
    </source>
</evidence>
<keyword id="KW-0143">Chaperone</keyword>
<keyword id="KW-0963">Cytoplasm</keyword>
<keyword id="KW-0235">DNA replication</keyword>
<keyword id="KW-0479">Metal-binding</keyword>
<keyword id="KW-1185">Reference proteome</keyword>
<keyword id="KW-0677">Repeat</keyword>
<keyword id="KW-0346">Stress response</keyword>
<keyword id="KW-0862">Zinc</keyword>
<keyword id="KW-0863">Zinc-finger</keyword>
<gene>
    <name evidence="1" type="primary">dnaJ</name>
    <name type="ordered locus">HCH_01225</name>
</gene>
<name>DNAJ_HAHCH</name>
<organism>
    <name type="scientific">Hahella chejuensis (strain KCTC 2396)</name>
    <dbReference type="NCBI Taxonomy" id="349521"/>
    <lineage>
        <taxon>Bacteria</taxon>
        <taxon>Pseudomonadati</taxon>
        <taxon>Pseudomonadota</taxon>
        <taxon>Gammaproteobacteria</taxon>
        <taxon>Oceanospirillales</taxon>
        <taxon>Hahellaceae</taxon>
        <taxon>Hahella</taxon>
    </lineage>
</organism>
<protein>
    <recommendedName>
        <fullName evidence="1">Chaperone protein DnaJ</fullName>
    </recommendedName>
</protein>
<accession>Q2SMM7</accession>
<feature type="chain" id="PRO_1000085205" description="Chaperone protein DnaJ">
    <location>
        <begin position="1"/>
        <end position="375"/>
    </location>
</feature>
<feature type="domain" description="J" evidence="1">
    <location>
        <begin position="5"/>
        <end position="70"/>
    </location>
</feature>
<feature type="repeat" description="CXXCXGXG motif">
    <location>
        <begin position="144"/>
        <end position="151"/>
    </location>
</feature>
<feature type="repeat" description="CXXCXGXG motif">
    <location>
        <begin position="161"/>
        <end position="168"/>
    </location>
</feature>
<feature type="repeat" description="CXXCXGXG motif">
    <location>
        <begin position="183"/>
        <end position="190"/>
    </location>
</feature>
<feature type="repeat" description="CXXCXGXG motif">
    <location>
        <begin position="197"/>
        <end position="204"/>
    </location>
</feature>
<feature type="zinc finger region" description="CR-type" evidence="1">
    <location>
        <begin position="131"/>
        <end position="209"/>
    </location>
</feature>
<feature type="binding site" evidence="1">
    <location>
        <position position="144"/>
    </location>
    <ligand>
        <name>Zn(2+)</name>
        <dbReference type="ChEBI" id="CHEBI:29105"/>
        <label>1</label>
    </ligand>
</feature>
<feature type="binding site" evidence="1">
    <location>
        <position position="147"/>
    </location>
    <ligand>
        <name>Zn(2+)</name>
        <dbReference type="ChEBI" id="CHEBI:29105"/>
        <label>1</label>
    </ligand>
</feature>
<feature type="binding site" evidence="1">
    <location>
        <position position="161"/>
    </location>
    <ligand>
        <name>Zn(2+)</name>
        <dbReference type="ChEBI" id="CHEBI:29105"/>
        <label>2</label>
    </ligand>
</feature>
<feature type="binding site" evidence="1">
    <location>
        <position position="164"/>
    </location>
    <ligand>
        <name>Zn(2+)</name>
        <dbReference type="ChEBI" id="CHEBI:29105"/>
        <label>2</label>
    </ligand>
</feature>
<feature type="binding site" evidence="1">
    <location>
        <position position="183"/>
    </location>
    <ligand>
        <name>Zn(2+)</name>
        <dbReference type="ChEBI" id="CHEBI:29105"/>
        <label>2</label>
    </ligand>
</feature>
<feature type="binding site" evidence="1">
    <location>
        <position position="186"/>
    </location>
    <ligand>
        <name>Zn(2+)</name>
        <dbReference type="ChEBI" id="CHEBI:29105"/>
        <label>2</label>
    </ligand>
</feature>
<feature type="binding site" evidence="1">
    <location>
        <position position="197"/>
    </location>
    <ligand>
        <name>Zn(2+)</name>
        <dbReference type="ChEBI" id="CHEBI:29105"/>
        <label>1</label>
    </ligand>
</feature>
<feature type="binding site" evidence="1">
    <location>
        <position position="200"/>
    </location>
    <ligand>
        <name>Zn(2+)</name>
        <dbReference type="ChEBI" id="CHEBI:29105"/>
        <label>1</label>
    </ligand>
</feature>
<sequence length="375" mass="40541">MAKRDYYEVLGVSRDVDGKEVKKAYRRLAMKYHPDRNPGDASAEEMFKEATEAYDVLSDDQKRAAYDQFGHAGVDGNAGAGGFGGGASFSDIFGDVFGDIFGGGGGGRTRANRGSDLRYTLDLDLEEAVRGTTVKIRVPSQVECKSCSGSGAEKGTQPETCGTCNGAGQVRMQQGFFSIQQTCPRCRGAGKIVRNPCRSCHGSGYVEEQKTLSVKVPAGVDTGDRIRLSGEGEPGVNGGPPGDLYVQVAVREHKIFTRDGRNLYCEVPISFVDAALGGELEVPTLDGRVKLKIPEETQTGRLFRLRGKGVTPVRGGAPGDLLCRVVVETPVNLTKKQKDLLREFQTSMEESGGQQAPKKHSWFEGVKSFFDDMKF</sequence>
<reference key="1">
    <citation type="journal article" date="2005" name="Nucleic Acids Res.">
        <title>Genomic blueprint of Hahella chejuensis, a marine microbe producing an algicidal agent.</title>
        <authorList>
            <person name="Jeong H."/>
            <person name="Yim J.H."/>
            <person name="Lee C."/>
            <person name="Choi S.-H."/>
            <person name="Park Y.K."/>
            <person name="Yoon S.H."/>
            <person name="Hur C.-G."/>
            <person name="Kang H.-Y."/>
            <person name="Kim D."/>
            <person name="Lee H.H."/>
            <person name="Park K.H."/>
            <person name="Park S.-H."/>
            <person name="Park H.-S."/>
            <person name="Lee H.K."/>
            <person name="Oh T.K."/>
            <person name="Kim J.F."/>
        </authorList>
    </citation>
    <scope>NUCLEOTIDE SEQUENCE [LARGE SCALE GENOMIC DNA]</scope>
    <source>
        <strain>KCTC 2396</strain>
    </source>
</reference>
<dbReference type="EMBL" id="CP000155">
    <property type="protein sequence ID" value="ABC28097.1"/>
    <property type="molecule type" value="Genomic_DNA"/>
</dbReference>
<dbReference type="RefSeq" id="WP_011395170.1">
    <property type="nucleotide sequence ID" value="NC_007645.1"/>
</dbReference>
<dbReference type="SMR" id="Q2SMM7"/>
<dbReference type="STRING" id="349521.HCH_01225"/>
<dbReference type="KEGG" id="hch:HCH_01225"/>
<dbReference type="eggNOG" id="COG0484">
    <property type="taxonomic scope" value="Bacteria"/>
</dbReference>
<dbReference type="HOGENOM" id="CLU_017633_0_7_6"/>
<dbReference type="OrthoDB" id="9779889at2"/>
<dbReference type="Proteomes" id="UP000000238">
    <property type="component" value="Chromosome"/>
</dbReference>
<dbReference type="GO" id="GO:0005737">
    <property type="term" value="C:cytoplasm"/>
    <property type="evidence" value="ECO:0007669"/>
    <property type="project" value="UniProtKB-SubCell"/>
</dbReference>
<dbReference type="GO" id="GO:0005524">
    <property type="term" value="F:ATP binding"/>
    <property type="evidence" value="ECO:0007669"/>
    <property type="project" value="InterPro"/>
</dbReference>
<dbReference type="GO" id="GO:0031072">
    <property type="term" value="F:heat shock protein binding"/>
    <property type="evidence" value="ECO:0007669"/>
    <property type="project" value="InterPro"/>
</dbReference>
<dbReference type="GO" id="GO:0051082">
    <property type="term" value="F:unfolded protein binding"/>
    <property type="evidence" value="ECO:0007669"/>
    <property type="project" value="UniProtKB-UniRule"/>
</dbReference>
<dbReference type="GO" id="GO:0008270">
    <property type="term" value="F:zinc ion binding"/>
    <property type="evidence" value="ECO:0007669"/>
    <property type="project" value="UniProtKB-UniRule"/>
</dbReference>
<dbReference type="GO" id="GO:0051085">
    <property type="term" value="P:chaperone cofactor-dependent protein refolding"/>
    <property type="evidence" value="ECO:0007669"/>
    <property type="project" value="TreeGrafter"/>
</dbReference>
<dbReference type="GO" id="GO:0006260">
    <property type="term" value="P:DNA replication"/>
    <property type="evidence" value="ECO:0007669"/>
    <property type="project" value="UniProtKB-KW"/>
</dbReference>
<dbReference type="GO" id="GO:0042026">
    <property type="term" value="P:protein refolding"/>
    <property type="evidence" value="ECO:0007669"/>
    <property type="project" value="TreeGrafter"/>
</dbReference>
<dbReference type="GO" id="GO:0009408">
    <property type="term" value="P:response to heat"/>
    <property type="evidence" value="ECO:0007669"/>
    <property type="project" value="InterPro"/>
</dbReference>
<dbReference type="CDD" id="cd06257">
    <property type="entry name" value="DnaJ"/>
    <property type="match status" value="1"/>
</dbReference>
<dbReference type="CDD" id="cd10747">
    <property type="entry name" value="DnaJ_C"/>
    <property type="match status" value="1"/>
</dbReference>
<dbReference type="CDD" id="cd10719">
    <property type="entry name" value="DnaJ_zf"/>
    <property type="match status" value="1"/>
</dbReference>
<dbReference type="FunFam" id="1.10.287.110:FF:000034">
    <property type="entry name" value="Chaperone protein DnaJ"/>
    <property type="match status" value="1"/>
</dbReference>
<dbReference type="FunFam" id="2.10.230.10:FF:000002">
    <property type="entry name" value="Molecular chaperone DnaJ"/>
    <property type="match status" value="1"/>
</dbReference>
<dbReference type="FunFam" id="2.60.260.20:FF:000004">
    <property type="entry name" value="Molecular chaperone DnaJ"/>
    <property type="match status" value="1"/>
</dbReference>
<dbReference type="Gene3D" id="1.10.287.110">
    <property type="entry name" value="DnaJ domain"/>
    <property type="match status" value="1"/>
</dbReference>
<dbReference type="Gene3D" id="2.10.230.10">
    <property type="entry name" value="Heat shock protein DnaJ, cysteine-rich domain"/>
    <property type="match status" value="1"/>
</dbReference>
<dbReference type="Gene3D" id="2.60.260.20">
    <property type="entry name" value="Urease metallochaperone UreE, N-terminal domain"/>
    <property type="match status" value="2"/>
</dbReference>
<dbReference type="HAMAP" id="MF_01152">
    <property type="entry name" value="DnaJ"/>
    <property type="match status" value="1"/>
</dbReference>
<dbReference type="InterPro" id="IPR012724">
    <property type="entry name" value="DnaJ"/>
</dbReference>
<dbReference type="InterPro" id="IPR002939">
    <property type="entry name" value="DnaJ_C"/>
</dbReference>
<dbReference type="InterPro" id="IPR001623">
    <property type="entry name" value="DnaJ_domain"/>
</dbReference>
<dbReference type="InterPro" id="IPR018253">
    <property type="entry name" value="DnaJ_domain_CS"/>
</dbReference>
<dbReference type="InterPro" id="IPR008971">
    <property type="entry name" value="HSP40/DnaJ_pept-bd"/>
</dbReference>
<dbReference type="InterPro" id="IPR001305">
    <property type="entry name" value="HSP_DnaJ_Cys-rich_dom"/>
</dbReference>
<dbReference type="InterPro" id="IPR036410">
    <property type="entry name" value="HSP_DnaJ_Cys-rich_dom_sf"/>
</dbReference>
<dbReference type="InterPro" id="IPR036869">
    <property type="entry name" value="J_dom_sf"/>
</dbReference>
<dbReference type="NCBIfam" id="TIGR02349">
    <property type="entry name" value="DnaJ_bact"/>
    <property type="match status" value="1"/>
</dbReference>
<dbReference type="NCBIfam" id="NF008035">
    <property type="entry name" value="PRK10767.1"/>
    <property type="match status" value="1"/>
</dbReference>
<dbReference type="PANTHER" id="PTHR43096:SF48">
    <property type="entry name" value="CHAPERONE PROTEIN DNAJ"/>
    <property type="match status" value="1"/>
</dbReference>
<dbReference type="PANTHER" id="PTHR43096">
    <property type="entry name" value="DNAJ HOMOLOG 1, MITOCHONDRIAL-RELATED"/>
    <property type="match status" value="1"/>
</dbReference>
<dbReference type="Pfam" id="PF00226">
    <property type="entry name" value="DnaJ"/>
    <property type="match status" value="1"/>
</dbReference>
<dbReference type="Pfam" id="PF01556">
    <property type="entry name" value="DnaJ_C"/>
    <property type="match status" value="1"/>
</dbReference>
<dbReference type="Pfam" id="PF00684">
    <property type="entry name" value="DnaJ_CXXCXGXG"/>
    <property type="match status" value="1"/>
</dbReference>
<dbReference type="PRINTS" id="PR00625">
    <property type="entry name" value="JDOMAIN"/>
</dbReference>
<dbReference type="SMART" id="SM00271">
    <property type="entry name" value="DnaJ"/>
    <property type="match status" value="1"/>
</dbReference>
<dbReference type="SUPFAM" id="SSF46565">
    <property type="entry name" value="Chaperone J-domain"/>
    <property type="match status" value="1"/>
</dbReference>
<dbReference type="SUPFAM" id="SSF57938">
    <property type="entry name" value="DnaJ/Hsp40 cysteine-rich domain"/>
    <property type="match status" value="1"/>
</dbReference>
<dbReference type="SUPFAM" id="SSF49493">
    <property type="entry name" value="HSP40/DnaJ peptide-binding domain"/>
    <property type="match status" value="2"/>
</dbReference>
<dbReference type="PROSITE" id="PS00636">
    <property type="entry name" value="DNAJ_1"/>
    <property type="match status" value="1"/>
</dbReference>
<dbReference type="PROSITE" id="PS50076">
    <property type="entry name" value="DNAJ_2"/>
    <property type="match status" value="1"/>
</dbReference>
<dbReference type="PROSITE" id="PS51188">
    <property type="entry name" value="ZF_CR"/>
    <property type="match status" value="1"/>
</dbReference>
<proteinExistence type="inferred from homology"/>
<comment type="function">
    <text evidence="1">Participates actively in the response to hyperosmotic and heat shock by preventing the aggregation of stress-denatured proteins and by disaggregating proteins, also in an autonomous, DnaK-independent fashion. Unfolded proteins bind initially to DnaJ; upon interaction with the DnaJ-bound protein, DnaK hydrolyzes its bound ATP, resulting in the formation of a stable complex. GrpE releases ADP from DnaK; ATP binding to DnaK triggers the release of the substrate protein, thus completing the reaction cycle. Several rounds of ATP-dependent interactions between DnaJ, DnaK and GrpE are required for fully efficient folding. Also involved, together with DnaK and GrpE, in the DNA replication of plasmids through activation of initiation proteins.</text>
</comment>
<comment type="cofactor">
    <cofactor evidence="1">
        <name>Zn(2+)</name>
        <dbReference type="ChEBI" id="CHEBI:29105"/>
    </cofactor>
    <text evidence="1">Binds 2 Zn(2+) ions per monomer.</text>
</comment>
<comment type="subunit">
    <text evidence="1">Homodimer.</text>
</comment>
<comment type="subcellular location">
    <subcellularLocation>
        <location evidence="1">Cytoplasm</location>
    </subcellularLocation>
</comment>
<comment type="domain">
    <text evidence="1">The J domain is necessary and sufficient to stimulate DnaK ATPase activity. Zinc center 1 plays an important role in the autonomous, DnaK-independent chaperone activity of DnaJ. Zinc center 2 is essential for interaction with DnaK and for DnaJ activity.</text>
</comment>
<comment type="similarity">
    <text evidence="1">Belongs to the DnaJ family.</text>
</comment>